<gene>
    <name type="primary">cspE</name>
    <name type="ordered locus">BUsg_473</name>
</gene>
<organism>
    <name type="scientific">Buchnera aphidicola subsp. Schizaphis graminum (strain Sg)</name>
    <dbReference type="NCBI Taxonomy" id="198804"/>
    <lineage>
        <taxon>Bacteria</taxon>
        <taxon>Pseudomonadati</taxon>
        <taxon>Pseudomonadota</taxon>
        <taxon>Gammaproteobacteria</taxon>
        <taxon>Enterobacterales</taxon>
        <taxon>Erwiniaceae</taxon>
        <taxon>Buchnera</taxon>
    </lineage>
</organism>
<dbReference type="EMBL" id="AE013218">
    <property type="protein sequence ID" value="AAM68016.1"/>
    <property type="molecule type" value="Genomic_DNA"/>
</dbReference>
<dbReference type="RefSeq" id="WP_009874442.1">
    <property type="nucleotide sequence ID" value="NC_004061.1"/>
</dbReference>
<dbReference type="SMR" id="P63238"/>
<dbReference type="STRING" id="198804.BUsg_473"/>
<dbReference type="GeneID" id="93003945"/>
<dbReference type="KEGG" id="bas:BUsg_473"/>
<dbReference type="eggNOG" id="COG1278">
    <property type="taxonomic scope" value="Bacteria"/>
</dbReference>
<dbReference type="HOGENOM" id="CLU_117621_2_1_6"/>
<dbReference type="Proteomes" id="UP000000416">
    <property type="component" value="Chromosome"/>
</dbReference>
<dbReference type="GO" id="GO:0005829">
    <property type="term" value="C:cytosol"/>
    <property type="evidence" value="ECO:0007669"/>
    <property type="project" value="UniProtKB-ARBA"/>
</dbReference>
<dbReference type="GO" id="GO:0003677">
    <property type="term" value="F:DNA binding"/>
    <property type="evidence" value="ECO:0007669"/>
    <property type="project" value="UniProtKB-KW"/>
</dbReference>
<dbReference type="CDD" id="cd04458">
    <property type="entry name" value="CSP_CDS"/>
    <property type="match status" value="1"/>
</dbReference>
<dbReference type="FunFam" id="2.40.50.140:FF:000006">
    <property type="entry name" value="Cold shock protein CspC"/>
    <property type="match status" value="1"/>
</dbReference>
<dbReference type="Gene3D" id="6.20.370.130">
    <property type="match status" value="1"/>
</dbReference>
<dbReference type="Gene3D" id="2.40.50.140">
    <property type="entry name" value="Nucleic acid-binding proteins"/>
    <property type="match status" value="1"/>
</dbReference>
<dbReference type="InterPro" id="IPR012156">
    <property type="entry name" value="Cold_shock_CspA"/>
</dbReference>
<dbReference type="InterPro" id="IPR050181">
    <property type="entry name" value="Cold_shock_domain"/>
</dbReference>
<dbReference type="InterPro" id="IPR011129">
    <property type="entry name" value="CSD"/>
</dbReference>
<dbReference type="InterPro" id="IPR019844">
    <property type="entry name" value="CSD_CS"/>
</dbReference>
<dbReference type="InterPro" id="IPR002059">
    <property type="entry name" value="CSP_DNA-bd"/>
</dbReference>
<dbReference type="InterPro" id="IPR012340">
    <property type="entry name" value="NA-bd_OB-fold"/>
</dbReference>
<dbReference type="NCBIfam" id="NF007062">
    <property type="entry name" value="PRK09507.1"/>
    <property type="match status" value="1"/>
</dbReference>
<dbReference type="NCBIfam" id="NF008190">
    <property type="entry name" value="PRK10943.1"/>
    <property type="match status" value="1"/>
</dbReference>
<dbReference type="PANTHER" id="PTHR11544">
    <property type="entry name" value="COLD SHOCK DOMAIN CONTAINING PROTEINS"/>
    <property type="match status" value="1"/>
</dbReference>
<dbReference type="Pfam" id="PF00313">
    <property type="entry name" value="CSD"/>
    <property type="match status" value="1"/>
</dbReference>
<dbReference type="PIRSF" id="PIRSF002599">
    <property type="entry name" value="Cold_shock_A"/>
    <property type="match status" value="1"/>
</dbReference>
<dbReference type="PRINTS" id="PR00050">
    <property type="entry name" value="COLDSHOCK"/>
</dbReference>
<dbReference type="SMART" id="SM00357">
    <property type="entry name" value="CSP"/>
    <property type="match status" value="1"/>
</dbReference>
<dbReference type="SUPFAM" id="SSF50249">
    <property type="entry name" value="Nucleic acid-binding proteins"/>
    <property type="match status" value="1"/>
</dbReference>
<dbReference type="PROSITE" id="PS00352">
    <property type="entry name" value="CSD_1"/>
    <property type="match status" value="1"/>
</dbReference>
<dbReference type="PROSITE" id="PS51857">
    <property type="entry name" value="CSD_2"/>
    <property type="match status" value="1"/>
</dbReference>
<proteinExistence type="inferred from homology"/>
<comment type="subcellular location">
    <subcellularLocation>
        <location evidence="1">Cytoplasm</location>
    </subcellularLocation>
</comment>
<protein>
    <recommendedName>
        <fullName>Cold shock-like protein CspE</fullName>
        <shortName>CSP-E</shortName>
    </recommendedName>
</protein>
<name>CSPE_BUCAP</name>
<sequence>MSKIKGNVKWFNESKGFGFITPEDGSKDVFVHFSAIQSNGFKTLAEGQSVEFEITEGAKGPSAANVISL</sequence>
<reference key="1">
    <citation type="journal article" date="2002" name="Science">
        <title>50 million years of genomic stasis in endosymbiotic bacteria.</title>
        <authorList>
            <person name="Tamas I."/>
            <person name="Klasson L."/>
            <person name="Canbaeck B."/>
            <person name="Naeslund A.K."/>
            <person name="Eriksson A.-S."/>
            <person name="Wernegreen J.J."/>
            <person name="Sandstroem J.P."/>
            <person name="Moran N.A."/>
            <person name="Andersson S.G.E."/>
        </authorList>
    </citation>
    <scope>NUCLEOTIDE SEQUENCE [LARGE SCALE GENOMIC DNA]</scope>
    <source>
        <strain>Sg</strain>
    </source>
</reference>
<evidence type="ECO:0000250" key="1"/>
<accession>P63238</accession>
<accession>P57560</accession>
<feature type="initiator methionine" description="Removed" evidence="1">
    <location>
        <position position="1"/>
    </location>
</feature>
<feature type="chain" id="PRO_0000100258" description="Cold shock-like protein CspE">
    <location>
        <begin position="2"/>
        <end position="69"/>
    </location>
</feature>
<feature type="domain" description="CSD">
    <location>
        <begin position="6"/>
        <end position="66"/>
    </location>
</feature>
<keyword id="KW-0010">Activator</keyword>
<keyword id="KW-0963">Cytoplasm</keyword>
<keyword id="KW-0238">DNA-binding</keyword>
<keyword id="KW-0804">Transcription</keyword>
<keyword id="KW-0805">Transcription regulation</keyword>